<organism>
    <name type="scientific">Acidothermus cellulolyticus (strain ATCC 43068 / DSM 8971 / 11B)</name>
    <dbReference type="NCBI Taxonomy" id="351607"/>
    <lineage>
        <taxon>Bacteria</taxon>
        <taxon>Bacillati</taxon>
        <taxon>Actinomycetota</taxon>
        <taxon>Actinomycetes</taxon>
        <taxon>Acidothermales</taxon>
        <taxon>Acidothermaceae</taxon>
        <taxon>Acidothermus</taxon>
    </lineage>
</organism>
<proteinExistence type="inferred from homology"/>
<gene>
    <name evidence="1" type="primary">pdxH</name>
    <name type="ordered locus">Acel_0116</name>
</gene>
<accession>A0LR32</accession>
<keyword id="KW-0285">Flavoprotein</keyword>
<keyword id="KW-0288">FMN</keyword>
<keyword id="KW-0560">Oxidoreductase</keyword>
<keyword id="KW-0664">Pyridoxine biosynthesis</keyword>
<keyword id="KW-1185">Reference proteome</keyword>
<name>PDXH_ACIC1</name>
<evidence type="ECO:0000255" key="1">
    <source>
        <dbReference type="HAMAP-Rule" id="MF_01629"/>
    </source>
</evidence>
<protein>
    <recommendedName>
        <fullName evidence="1">Pyridoxine/pyridoxamine 5'-phosphate oxidase</fullName>
        <ecNumber evidence="1">1.4.3.5</ecNumber>
    </recommendedName>
    <alternativeName>
        <fullName evidence="1">PNP/PMP oxidase</fullName>
        <shortName evidence="1">PNPOx</shortName>
    </alternativeName>
    <alternativeName>
        <fullName evidence="1">Pyridoxal 5'-phosphate synthase</fullName>
    </alternativeName>
</protein>
<comment type="function">
    <text evidence="1">Catalyzes the oxidation of either pyridoxine 5'-phosphate (PNP) or pyridoxamine 5'-phosphate (PMP) into pyridoxal 5'-phosphate (PLP).</text>
</comment>
<comment type="catalytic activity">
    <reaction evidence="1">
        <text>pyridoxamine 5'-phosphate + O2 + H2O = pyridoxal 5'-phosphate + H2O2 + NH4(+)</text>
        <dbReference type="Rhea" id="RHEA:15817"/>
        <dbReference type="ChEBI" id="CHEBI:15377"/>
        <dbReference type="ChEBI" id="CHEBI:15379"/>
        <dbReference type="ChEBI" id="CHEBI:16240"/>
        <dbReference type="ChEBI" id="CHEBI:28938"/>
        <dbReference type="ChEBI" id="CHEBI:58451"/>
        <dbReference type="ChEBI" id="CHEBI:597326"/>
        <dbReference type="EC" id="1.4.3.5"/>
    </reaction>
</comment>
<comment type="catalytic activity">
    <reaction evidence="1">
        <text>pyridoxine 5'-phosphate + O2 = pyridoxal 5'-phosphate + H2O2</text>
        <dbReference type="Rhea" id="RHEA:15149"/>
        <dbReference type="ChEBI" id="CHEBI:15379"/>
        <dbReference type="ChEBI" id="CHEBI:16240"/>
        <dbReference type="ChEBI" id="CHEBI:58589"/>
        <dbReference type="ChEBI" id="CHEBI:597326"/>
        <dbReference type="EC" id="1.4.3.5"/>
    </reaction>
</comment>
<comment type="cofactor">
    <cofactor evidence="1">
        <name>FMN</name>
        <dbReference type="ChEBI" id="CHEBI:58210"/>
    </cofactor>
    <text evidence="1">Binds 1 FMN per subunit.</text>
</comment>
<comment type="pathway">
    <text evidence="1">Cofactor metabolism; pyridoxal 5'-phosphate salvage; pyridoxal 5'-phosphate from pyridoxamine 5'-phosphate: step 1/1.</text>
</comment>
<comment type="pathway">
    <text evidence="1">Cofactor metabolism; pyridoxal 5'-phosphate salvage; pyridoxal 5'-phosphate from pyridoxine 5'-phosphate: step 1/1.</text>
</comment>
<comment type="subunit">
    <text evidence="1">Homodimer.</text>
</comment>
<comment type="similarity">
    <text evidence="1">Belongs to the pyridoxamine 5'-phosphate oxidase family.</text>
</comment>
<dbReference type="EC" id="1.4.3.5" evidence="1"/>
<dbReference type="EMBL" id="CP000481">
    <property type="protein sequence ID" value="ABK51892.1"/>
    <property type="molecule type" value="Genomic_DNA"/>
</dbReference>
<dbReference type="RefSeq" id="WP_011718956.1">
    <property type="nucleotide sequence ID" value="NC_008578.1"/>
</dbReference>
<dbReference type="SMR" id="A0LR32"/>
<dbReference type="FunCoup" id="A0LR32">
    <property type="interactions" value="271"/>
</dbReference>
<dbReference type="STRING" id="351607.Acel_0116"/>
<dbReference type="KEGG" id="ace:Acel_0116"/>
<dbReference type="eggNOG" id="COG0259">
    <property type="taxonomic scope" value="Bacteria"/>
</dbReference>
<dbReference type="HOGENOM" id="CLU_032263_2_2_11"/>
<dbReference type="InParanoid" id="A0LR32"/>
<dbReference type="OrthoDB" id="9780392at2"/>
<dbReference type="UniPathway" id="UPA01068">
    <property type="reaction ID" value="UER00304"/>
</dbReference>
<dbReference type="UniPathway" id="UPA01068">
    <property type="reaction ID" value="UER00305"/>
</dbReference>
<dbReference type="Proteomes" id="UP000008221">
    <property type="component" value="Chromosome"/>
</dbReference>
<dbReference type="GO" id="GO:0010181">
    <property type="term" value="F:FMN binding"/>
    <property type="evidence" value="ECO:0007669"/>
    <property type="project" value="UniProtKB-UniRule"/>
</dbReference>
<dbReference type="GO" id="GO:0004733">
    <property type="term" value="F:pyridoxamine phosphate oxidase activity"/>
    <property type="evidence" value="ECO:0007669"/>
    <property type="project" value="UniProtKB-UniRule"/>
</dbReference>
<dbReference type="GO" id="GO:0008615">
    <property type="term" value="P:pyridoxine biosynthetic process"/>
    <property type="evidence" value="ECO:0007669"/>
    <property type="project" value="UniProtKB-KW"/>
</dbReference>
<dbReference type="Gene3D" id="2.30.110.10">
    <property type="entry name" value="Electron Transport, Fmn-binding Protein, Chain A"/>
    <property type="match status" value="1"/>
</dbReference>
<dbReference type="HAMAP" id="MF_01629">
    <property type="entry name" value="PdxH"/>
    <property type="match status" value="1"/>
</dbReference>
<dbReference type="InterPro" id="IPR000659">
    <property type="entry name" value="Pyridox_Oxase"/>
</dbReference>
<dbReference type="InterPro" id="IPR019740">
    <property type="entry name" value="Pyridox_Oxase_CS"/>
</dbReference>
<dbReference type="InterPro" id="IPR011576">
    <property type="entry name" value="Pyridox_Oxase_N"/>
</dbReference>
<dbReference type="InterPro" id="IPR019576">
    <property type="entry name" value="Pyridoxamine_oxidase_dimer_C"/>
</dbReference>
<dbReference type="InterPro" id="IPR012349">
    <property type="entry name" value="Split_barrel_FMN-bd"/>
</dbReference>
<dbReference type="NCBIfam" id="TIGR00558">
    <property type="entry name" value="pdxH"/>
    <property type="match status" value="1"/>
</dbReference>
<dbReference type="NCBIfam" id="NF004231">
    <property type="entry name" value="PRK05679.1"/>
    <property type="match status" value="1"/>
</dbReference>
<dbReference type="PANTHER" id="PTHR10851:SF0">
    <property type="entry name" value="PYRIDOXINE-5'-PHOSPHATE OXIDASE"/>
    <property type="match status" value="1"/>
</dbReference>
<dbReference type="PANTHER" id="PTHR10851">
    <property type="entry name" value="PYRIDOXINE-5-PHOSPHATE OXIDASE"/>
    <property type="match status" value="1"/>
</dbReference>
<dbReference type="Pfam" id="PF10590">
    <property type="entry name" value="PNP_phzG_C"/>
    <property type="match status" value="1"/>
</dbReference>
<dbReference type="Pfam" id="PF01243">
    <property type="entry name" value="PNPOx_N"/>
    <property type="match status" value="1"/>
</dbReference>
<dbReference type="PIRSF" id="PIRSF000190">
    <property type="entry name" value="Pyd_amn-ph_oxd"/>
    <property type="match status" value="1"/>
</dbReference>
<dbReference type="SUPFAM" id="SSF50475">
    <property type="entry name" value="FMN-binding split barrel"/>
    <property type="match status" value="1"/>
</dbReference>
<dbReference type="PROSITE" id="PS01064">
    <property type="entry name" value="PYRIDOX_OXIDASE"/>
    <property type="match status" value="1"/>
</dbReference>
<sequence length="224" mass="25428">MRHGTHTGSNPYAEAYVEVTAGGLAETDLAADPIEQFRRWLADAIRYNLPEPTAMVVATADADGRPSSRHVLLKSVDDGFVFFTNYRSRKGRDLSENPSASLCFPWFAIGRQVVVLGTVTKVTREETEEYFASRPRDSQCGAWSSENQSSVVPSRAWLDERYAEVAQRFAGVEHIPPPPFWGGFRVIPETVEFWQARPARMHDRLRYRRTADGERPWIIERLSP</sequence>
<feature type="chain" id="PRO_0000292281" description="Pyridoxine/pyridoxamine 5'-phosphate oxidase">
    <location>
        <begin position="1"/>
        <end position="224"/>
    </location>
</feature>
<feature type="binding site" evidence="1">
    <location>
        <begin position="69"/>
        <end position="74"/>
    </location>
    <ligand>
        <name>FMN</name>
        <dbReference type="ChEBI" id="CHEBI:58210"/>
    </ligand>
</feature>
<feature type="binding site" evidence="1">
    <location>
        <position position="74"/>
    </location>
    <ligand>
        <name>substrate</name>
    </ligand>
</feature>
<feature type="binding site" evidence="1">
    <location>
        <begin position="83"/>
        <end position="84"/>
    </location>
    <ligand>
        <name>FMN</name>
        <dbReference type="ChEBI" id="CHEBI:58210"/>
    </ligand>
</feature>
<feature type="binding site" evidence="1">
    <location>
        <position position="89"/>
    </location>
    <ligand>
        <name>FMN</name>
        <dbReference type="ChEBI" id="CHEBI:58210"/>
    </ligand>
</feature>
<feature type="binding site" evidence="1">
    <location>
        <position position="90"/>
    </location>
    <ligand>
        <name>FMN</name>
        <dbReference type="ChEBI" id="CHEBI:58210"/>
    </ligand>
</feature>
<feature type="binding site" evidence="1">
    <location>
        <position position="112"/>
    </location>
    <ligand>
        <name>FMN</name>
        <dbReference type="ChEBI" id="CHEBI:58210"/>
    </ligand>
</feature>
<feature type="binding site" evidence="1">
    <location>
        <position position="130"/>
    </location>
    <ligand>
        <name>substrate</name>
    </ligand>
</feature>
<feature type="binding site" evidence="1">
    <location>
        <position position="134"/>
    </location>
    <ligand>
        <name>substrate</name>
    </ligand>
</feature>
<feature type="binding site" evidence="1">
    <location>
        <position position="138"/>
    </location>
    <ligand>
        <name>substrate</name>
    </ligand>
</feature>
<feature type="binding site" evidence="1">
    <location>
        <begin position="148"/>
        <end position="149"/>
    </location>
    <ligand>
        <name>FMN</name>
        <dbReference type="ChEBI" id="CHEBI:58210"/>
    </ligand>
</feature>
<feature type="binding site" evidence="1">
    <location>
        <position position="194"/>
    </location>
    <ligand>
        <name>FMN</name>
        <dbReference type="ChEBI" id="CHEBI:58210"/>
    </ligand>
</feature>
<feature type="binding site" evidence="1">
    <location>
        <begin position="200"/>
        <end position="202"/>
    </location>
    <ligand>
        <name>substrate</name>
    </ligand>
</feature>
<feature type="binding site" evidence="1">
    <location>
        <position position="204"/>
    </location>
    <ligand>
        <name>FMN</name>
        <dbReference type="ChEBI" id="CHEBI:58210"/>
    </ligand>
</feature>
<reference key="1">
    <citation type="journal article" date="2009" name="Genome Res.">
        <title>Complete genome of the cellulolytic thermophile Acidothermus cellulolyticus 11B provides insights into its ecophysiological and evolutionary adaptations.</title>
        <authorList>
            <person name="Barabote R.D."/>
            <person name="Xie G."/>
            <person name="Leu D.H."/>
            <person name="Normand P."/>
            <person name="Necsulea A."/>
            <person name="Daubin V."/>
            <person name="Medigue C."/>
            <person name="Adney W.S."/>
            <person name="Xu X.C."/>
            <person name="Lapidus A."/>
            <person name="Parales R.E."/>
            <person name="Detter C."/>
            <person name="Pujic P."/>
            <person name="Bruce D."/>
            <person name="Lavire C."/>
            <person name="Challacombe J.F."/>
            <person name="Brettin T.S."/>
            <person name="Berry A.M."/>
        </authorList>
    </citation>
    <scope>NUCLEOTIDE SEQUENCE [LARGE SCALE GENOMIC DNA]</scope>
    <source>
        <strain>ATCC 43068 / DSM 8971 / 11B</strain>
    </source>
</reference>